<evidence type="ECO:0000255" key="1">
    <source>
        <dbReference type="HAMAP-Rule" id="MF_01201"/>
    </source>
</evidence>
<accession>Q9ZKQ9</accession>
<name>ALR_HELPJ</name>
<gene>
    <name type="primary">alr</name>
    <name type="ordered locus">jhp_0876</name>
</gene>
<comment type="function">
    <text evidence="1">Catalyzes the interconversion of L-alanine and D-alanine. May also act on other amino acids.</text>
</comment>
<comment type="catalytic activity">
    <reaction evidence="1">
        <text>L-alanine = D-alanine</text>
        <dbReference type="Rhea" id="RHEA:20249"/>
        <dbReference type="ChEBI" id="CHEBI:57416"/>
        <dbReference type="ChEBI" id="CHEBI:57972"/>
        <dbReference type="EC" id="5.1.1.1"/>
    </reaction>
</comment>
<comment type="cofactor">
    <cofactor evidence="1">
        <name>pyridoxal 5'-phosphate</name>
        <dbReference type="ChEBI" id="CHEBI:597326"/>
    </cofactor>
</comment>
<comment type="pathway">
    <text evidence="1">Amino-acid biosynthesis; D-alanine biosynthesis; D-alanine from L-alanine: step 1/1.</text>
</comment>
<comment type="similarity">
    <text evidence="1">Belongs to the alanine racemase family.</text>
</comment>
<reference key="1">
    <citation type="journal article" date="1999" name="Nature">
        <title>Genomic sequence comparison of two unrelated isolates of the human gastric pathogen Helicobacter pylori.</title>
        <authorList>
            <person name="Alm R.A."/>
            <person name="Ling L.-S.L."/>
            <person name="Moir D.T."/>
            <person name="King B.L."/>
            <person name="Brown E.D."/>
            <person name="Doig P.C."/>
            <person name="Smith D.R."/>
            <person name="Noonan B."/>
            <person name="Guild B.C."/>
            <person name="deJonge B.L."/>
            <person name="Carmel G."/>
            <person name="Tummino P.J."/>
            <person name="Caruso A."/>
            <person name="Uria-Nickelsen M."/>
            <person name="Mills D.M."/>
            <person name="Ives C."/>
            <person name="Gibson R."/>
            <person name="Merberg D."/>
            <person name="Mills S.D."/>
            <person name="Jiang Q."/>
            <person name="Taylor D.E."/>
            <person name="Vovis G.F."/>
            <person name="Trust T.J."/>
        </authorList>
    </citation>
    <scope>NUCLEOTIDE SEQUENCE [LARGE SCALE GENOMIC DNA]</scope>
    <source>
        <strain>J99 / ATCC 700824</strain>
    </source>
</reference>
<protein>
    <recommendedName>
        <fullName evidence="1">Alanine racemase</fullName>
        <ecNumber evidence="1">5.1.1.1</ecNumber>
    </recommendedName>
</protein>
<dbReference type="EC" id="5.1.1.1" evidence="1"/>
<dbReference type="EMBL" id="AE001439">
    <property type="protein sequence ID" value="AAD06456.1"/>
    <property type="molecule type" value="Genomic_DNA"/>
</dbReference>
<dbReference type="PIR" id="F71877">
    <property type="entry name" value="F71877"/>
</dbReference>
<dbReference type="RefSeq" id="WP_000918013.1">
    <property type="nucleotide sequence ID" value="NC_000921.1"/>
</dbReference>
<dbReference type="SMR" id="Q9ZKQ9"/>
<dbReference type="KEGG" id="hpj:jhp_0876"/>
<dbReference type="PATRIC" id="fig|85963.30.peg.86"/>
<dbReference type="eggNOG" id="COG0787">
    <property type="taxonomic scope" value="Bacteria"/>
</dbReference>
<dbReference type="UniPathway" id="UPA00042">
    <property type="reaction ID" value="UER00497"/>
</dbReference>
<dbReference type="Proteomes" id="UP000000804">
    <property type="component" value="Chromosome"/>
</dbReference>
<dbReference type="GO" id="GO:0005829">
    <property type="term" value="C:cytosol"/>
    <property type="evidence" value="ECO:0007669"/>
    <property type="project" value="TreeGrafter"/>
</dbReference>
<dbReference type="GO" id="GO:0008784">
    <property type="term" value="F:alanine racemase activity"/>
    <property type="evidence" value="ECO:0007669"/>
    <property type="project" value="UniProtKB-UniRule"/>
</dbReference>
<dbReference type="GO" id="GO:0030170">
    <property type="term" value="F:pyridoxal phosphate binding"/>
    <property type="evidence" value="ECO:0007669"/>
    <property type="project" value="UniProtKB-UniRule"/>
</dbReference>
<dbReference type="GO" id="GO:0030632">
    <property type="term" value="P:D-alanine biosynthetic process"/>
    <property type="evidence" value="ECO:0007669"/>
    <property type="project" value="UniProtKB-UniRule"/>
</dbReference>
<dbReference type="CDD" id="cd00430">
    <property type="entry name" value="PLPDE_III_AR"/>
    <property type="match status" value="1"/>
</dbReference>
<dbReference type="FunFam" id="3.20.20.10:FF:000002">
    <property type="entry name" value="Alanine racemase"/>
    <property type="match status" value="1"/>
</dbReference>
<dbReference type="Gene3D" id="3.20.20.10">
    <property type="entry name" value="Alanine racemase"/>
    <property type="match status" value="1"/>
</dbReference>
<dbReference type="Gene3D" id="2.40.37.10">
    <property type="entry name" value="Lyase, Ornithine Decarboxylase, Chain A, domain 1"/>
    <property type="match status" value="1"/>
</dbReference>
<dbReference type="HAMAP" id="MF_01201">
    <property type="entry name" value="Ala_racemase"/>
    <property type="match status" value="1"/>
</dbReference>
<dbReference type="InterPro" id="IPR000821">
    <property type="entry name" value="Ala_racemase"/>
</dbReference>
<dbReference type="InterPro" id="IPR009006">
    <property type="entry name" value="Ala_racemase/Decarboxylase_C"/>
</dbReference>
<dbReference type="InterPro" id="IPR011079">
    <property type="entry name" value="Ala_racemase_C"/>
</dbReference>
<dbReference type="InterPro" id="IPR001608">
    <property type="entry name" value="Ala_racemase_N"/>
</dbReference>
<dbReference type="InterPro" id="IPR020622">
    <property type="entry name" value="Ala_racemase_pyridoxalP-BS"/>
</dbReference>
<dbReference type="InterPro" id="IPR029066">
    <property type="entry name" value="PLP-binding_barrel"/>
</dbReference>
<dbReference type="NCBIfam" id="TIGR00492">
    <property type="entry name" value="alr"/>
    <property type="match status" value="1"/>
</dbReference>
<dbReference type="PANTHER" id="PTHR30511">
    <property type="entry name" value="ALANINE RACEMASE"/>
    <property type="match status" value="1"/>
</dbReference>
<dbReference type="PANTHER" id="PTHR30511:SF0">
    <property type="entry name" value="ALANINE RACEMASE, CATABOLIC-RELATED"/>
    <property type="match status" value="1"/>
</dbReference>
<dbReference type="Pfam" id="PF00842">
    <property type="entry name" value="Ala_racemase_C"/>
    <property type="match status" value="1"/>
</dbReference>
<dbReference type="Pfam" id="PF01168">
    <property type="entry name" value="Ala_racemase_N"/>
    <property type="match status" value="1"/>
</dbReference>
<dbReference type="PRINTS" id="PR00992">
    <property type="entry name" value="ALARACEMASE"/>
</dbReference>
<dbReference type="SMART" id="SM01005">
    <property type="entry name" value="Ala_racemase_C"/>
    <property type="match status" value="1"/>
</dbReference>
<dbReference type="SUPFAM" id="SSF50621">
    <property type="entry name" value="Alanine racemase C-terminal domain-like"/>
    <property type="match status" value="1"/>
</dbReference>
<dbReference type="SUPFAM" id="SSF51419">
    <property type="entry name" value="PLP-binding barrel"/>
    <property type="match status" value="1"/>
</dbReference>
<dbReference type="PROSITE" id="PS00395">
    <property type="entry name" value="ALANINE_RACEMASE"/>
    <property type="match status" value="1"/>
</dbReference>
<sequence length="377" mass="42039">MLKRASFVEVNTHSLRHNFNAVKNIVPKDACVMAVVKANAYGAGAIKASEIFLQEGANYLGVATLDEALELRSHFSQTPILILGYSPNTNASMLIDNDLSAMVFSLEQAEVFSQMALKSQKRLKVHLKIDTGMHRLGLEPTFKSIETIKKIRALKGLEVEGIFTHLSNADSNIKTHAKNQMKVFNAFLEQLLDQKIEFQYRHAYNSAGILSLCNGNENRLLNLYRPGIMLYGFYPSNEMKESSQTILKNVISLKARIVQIKRVKKGEFIGYGEHFYTNEETLVGVLALGYADGLVRALGNRIQVAINNQLAPLIGKVCMDQCFVKLNDIEAKEGDEVILFGDKSTKANDASEIATLLNTIPYETISTLSKRLERVYV</sequence>
<proteinExistence type="inferred from homology"/>
<organism>
    <name type="scientific">Helicobacter pylori (strain J99 / ATCC 700824)</name>
    <name type="common">Campylobacter pylori J99</name>
    <dbReference type="NCBI Taxonomy" id="85963"/>
    <lineage>
        <taxon>Bacteria</taxon>
        <taxon>Pseudomonadati</taxon>
        <taxon>Campylobacterota</taxon>
        <taxon>Epsilonproteobacteria</taxon>
        <taxon>Campylobacterales</taxon>
        <taxon>Helicobacteraceae</taxon>
        <taxon>Helicobacter</taxon>
    </lineage>
</organism>
<keyword id="KW-0413">Isomerase</keyword>
<keyword id="KW-0663">Pyridoxal phosphate</keyword>
<feature type="chain" id="PRO_0000114524" description="Alanine racemase">
    <location>
        <begin position="1"/>
        <end position="377"/>
    </location>
</feature>
<feature type="active site" description="Proton acceptor; specific for D-alanine" evidence="1">
    <location>
        <position position="37"/>
    </location>
</feature>
<feature type="active site" description="Proton acceptor; specific for L-alanine" evidence="1">
    <location>
        <position position="271"/>
    </location>
</feature>
<feature type="binding site" evidence="1">
    <location>
        <position position="135"/>
    </location>
    <ligand>
        <name>substrate</name>
    </ligand>
</feature>
<feature type="binding site" evidence="1">
    <location>
        <position position="319"/>
    </location>
    <ligand>
        <name>substrate</name>
    </ligand>
</feature>
<feature type="modified residue" description="N6-(pyridoxal phosphate)lysine" evidence="1">
    <location>
        <position position="37"/>
    </location>
</feature>